<organism>
    <name type="scientific">Rickettsia montanensis</name>
    <dbReference type="NCBI Taxonomy" id="33991"/>
    <lineage>
        <taxon>Bacteria</taxon>
        <taxon>Pseudomonadati</taxon>
        <taxon>Pseudomonadota</taxon>
        <taxon>Alphaproteobacteria</taxon>
        <taxon>Rickettsiales</taxon>
        <taxon>Rickettsiaceae</taxon>
        <taxon>Rickettsieae</taxon>
        <taxon>Rickettsia</taxon>
        <taxon>spotted fever group</taxon>
    </lineage>
</organism>
<gene>
    <name type="primary">fdxB</name>
    <name type="synonym">adx1</name>
</gene>
<keyword id="KW-0001">2Fe-2S</keyword>
<keyword id="KW-0249">Electron transport</keyword>
<keyword id="KW-0408">Iron</keyword>
<keyword id="KW-0411">Iron-sulfur</keyword>
<keyword id="KW-0479">Metal-binding</keyword>
<keyword id="KW-0813">Transport</keyword>
<proteinExistence type="inferred from homology"/>
<evidence type="ECO:0000250" key="1"/>
<evidence type="ECO:0000255" key="2">
    <source>
        <dbReference type="PROSITE-ProRule" id="PRU00465"/>
    </source>
</evidence>
<evidence type="ECO:0000305" key="3"/>
<protein>
    <recommendedName>
        <fullName>2Fe-2S ferredoxin</fullName>
    </recommendedName>
    <alternativeName>
        <fullName>Adrenodoxin-like protein</fullName>
    </alternativeName>
</protein>
<comment type="function">
    <text>Ferredoxin are iron-sulfur proteins that transfer electrons in a wide variety of metabolic reactions.</text>
</comment>
<comment type="cofactor">
    <cofactor evidence="1">
        <name>[2Fe-2S] cluster</name>
        <dbReference type="ChEBI" id="CHEBI:190135"/>
    </cofactor>
    <text evidence="1">Binds 1 [2Fe-2S] cluster.</text>
</comment>
<comment type="similarity">
    <text evidence="3">Belongs to the adrenodoxin/putidaredoxin family.</text>
</comment>
<reference key="1">
    <citation type="journal article" date="2001" name="Mol. Biol. Evol.">
        <title>Pseudogenes, junk DNA, and the dynamics of Rickettsia genomes.</title>
        <authorList>
            <person name="Andersson J.O."/>
            <person name="Andersson S.G.E."/>
        </authorList>
    </citation>
    <scope>NUCLEOTIDE SEQUENCE [GENOMIC DNA]</scope>
</reference>
<dbReference type="EMBL" id="AJ293321">
    <property type="protein sequence ID" value="CAC33623.1"/>
    <property type="molecule type" value="mRNA"/>
</dbReference>
<dbReference type="SMR" id="Q9AKM6"/>
<dbReference type="OMA" id="TCHCIIR"/>
<dbReference type="GO" id="GO:0051537">
    <property type="term" value="F:2 iron, 2 sulfur cluster binding"/>
    <property type="evidence" value="ECO:0007669"/>
    <property type="project" value="UniProtKB-KW"/>
</dbReference>
<dbReference type="GO" id="GO:0009055">
    <property type="term" value="F:electron transfer activity"/>
    <property type="evidence" value="ECO:0007669"/>
    <property type="project" value="TreeGrafter"/>
</dbReference>
<dbReference type="GO" id="GO:0046872">
    <property type="term" value="F:metal ion binding"/>
    <property type="evidence" value="ECO:0007669"/>
    <property type="project" value="UniProtKB-KW"/>
</dbReference>
<dbReference type="GO" id="GO:0140647">
    <property type="term" value="P:P450-containing electron transport chain"/>
    <property type="evidence" value="ECO:0007669"/>
    <property type="project" value="InterPro"/>
</dbReference>
<dbReference type="CDD" id="cd00207">
    <property type="entry name" value="fer2"/>
    <property type="match status" value="1"/>
</dbReference>
<dbReference type="Gene3D" id="3.10.20.30">
    <property type="match status" value="1"/>
</dbReference>
<dbReference type="InterPro" id="IPR036010">
    <property type="entry name" value="2Fe-2S_ferredoxin-like_sf"/>
</dbReference>
<dbReference type="InterPro" id="IPR001041">
    <property type="entry name" value="2Fe-2S_ferredoxin-type"/>
</dbReference>
<dbReference type="InterPro" id="IPR001055">
    <property type="entry name" value="Adrenodoxin-like"/>
</dbReference>
<dbReference type="InterPro" id="IPR018298">
    <property type="entry name" value="Adrenodoxin_Fe-S_BS"/>
</dbReference>
<dbReference type="InterPro" id="IPR012675">
    <property type="entry name" value="Beta-grasp_dom_sf"/>
</dbReference>
<dbReference type="PANTHER" id="PTHR23426:SF72">
    <property type="entry name" value="2FE-2S FERREDOXIN-TYPE DOMAIN-CONTAINING PROTEIN"/>
    <property type="match status" value="1"/>
</dbReference>
<dbReference type="PANTHER" id="PTHR23426">
    <property type="entry name" value="FERREDOXIN/ADRENODOXIN"/>
    <property type="match status" value="1"/>
</dbReference>
<dbReference type="Pfam" id="PF00111">
    <property type="entry name" value="Fer2"/>
    <property type="match status" value="1"/>
</dbReference>
<dbReference type="PRINTS" id="PR00355">
    <property type="entry name" value="ADRENODOXIN"/>
</dbReference>
<dbReference type="SUPFAM" id="SSF54292">
    <property type="entry name" value="2Fe-2S ferredoxin-like"/>
    <property type="match status" value="1"/>
</dbReference>
<dbReference type="PROSITE" id="PS51085">
    <property type="entry name" value="2FE2S_FER_2"/>
    <property type="match status" value="1"/>
</dbReference>
<dbReference type="PROSITE" id="PS00814">
    <property type="entry name" value="ADX"/>
    <property type="match status" value="1"/>
</dbReference>
<feature type="chain" id="PRO_0000201176" description="2Fe-2S ferredoxin">
    <location>
        <begin position="1"/>
        <end position="112"/>
    </location>
</feature>
<feature type="domain" description="2Fe-2S ferredoxin-type" evidence="2">
    <location>
        <begin position="5"/>
        <end position="107"/>
    </location>
</feature>
<feature type="binding site" evidence="2">
    <location>
        <position position="42"/>
    </location>
    <ligand>
        <name>[2Fe-2S] cluster</name>
        <dbReference type="ChEBI" id="CHEBI:190135"/>
    </ligand>
</feature>
<feature type="binding site" evidence="2">
    <location>
        <position position="48"/>
    </location>
    <ligand>
        <name>[2Fe-2S] cluster</name>
        <dbReference type="ChEBI" id="CHEBI:190135"/>
    </ligand>
</feature>
<feature type="binding site" evidence="2">
    <location>
        <position position="51"/>
    </location>
    <ligand>
        <name>[2Fe-2S] cluster</name>
        <dbReference type="ChEBI" id="CHEBI:190135"/>
    </ligand>
</feature>
<feature type="binding site" evidence="2">
    <location>
        <position position="88"/>
    </location>
    <ligand>
        <name>[2Fe-2S] cluster</name>
        <dbReference type="ChEBI" id="CHEBI:190135"/>
    </ligand>
</feature>
<sequence length="112" mass="12250">MSGKIKVTFIINDGEEKTVEAPIGLSILEIAHSNDLDLEGACEGSLACATCHVILEEEFYNKLKKPTEAEEDMLDLAFGLTDTSRLGCQIILTEELDGIKVRLPSATRNIKL</sequence>
<name>FER2_RICMO</name>
<accession>Q9AKM6</accession>